<comment type="function">
    <text evidence="1">Catalyzes the specific phosphorylation of the 3-hydroxyl group of shikimic acid using ATP as a cosubstrate.</text>
</comment>
<comment type="catalytic activity">
    <reaction evidence="1">
        <text>shikimate + ATP = 3-phosphoshikimate + ADP + H(+)</text>
        <dbReference type="Rhea" id="RHEA:13121"/>
        <dbReference type="ChEBI" id="CHEBI:15378"/>
        <dbReference type="ChEBI" id="CHEBI:30616"/>
        <dbReference type="ChEBI" id="CHEBI:36208"/>
        <dbReference type="ChEBI" id="CHEBI:145989"/>
        <dbReference type="ChEBI" id="CHEBI:456216"/>
        <dbReference type="EC" id="2.7.1.71"/>
    </reaction>
</comment>
<comment type="cofactor">
    <cofactor evidence="1">
        <name>Mg(2+)</name>
        <dbReference type="ChEBI" id="CHEBI:18420"/>
    </cofactor>
    <text evidence="1">Binds 1 Mg(2+) ion per subunit.</text>
</comment>
<comment type="pathway">
    <text evidence="1">Metabolic intermediate biosynthesis; chorismate biosynthesis; chorismate from D-erythrose 4-phosphate and phosphoenolpyruvate: step 5/7.</text>
</comment>
<comment type="subunit">
    <text evidence="1">Monomer.</text>
</comment>
<comment type="subcellular location">
    <subcellularLocation>
        <location evidence="1">Cytoplasm</location>
    </subcellularLocation>
</comment>
<comment type="similarity">
    <text evidence="1">Belongs to the shikimate kinase family.</text>
</comment>
<feature type="chain" id="PRO_1000117466" description="Shikimate kinase">
    <location>
        <begin position="1"/>
        <end position="172"/>
    </location>
</feature>
<feature type="binding site" evidence="1">
    <location>
        <begin position="11"/>
        <end position="16"/>
    </location>
    <ligand>
        <name>ATP</name>
        <dbReference type="ChEBI" id="CHEBI:30616"/>
    </ligand>
</feature>
<feature type="binding site" evidence="1">
    <location>
        <position position="15"/>
    </location>
    <ligand>
        <name>Mg(2+)</name>
        <dbReference type="ChEBI" id="CHEBI:18420"/>
    </ligand>
</feature>
<feature type="binding site" evidence="1">
    <location>
        <position position="33"/>
    </location>
    <ligand>
        <name>substrate</name>
    </ligand>
</feature>
<feature type="binding site" evidence="1">
    <location>
        <position position="57"/>
    </location>
    <ligand>
        <name>substrate</name>
    </ligand>
</feature>
<feature type="binding site" evidence="1">
    <location>
        <position position="79"/>
    </location>
    <ligand>
        <name>substrate</name>
    </ligand>
</feature>
<feature type="binding site" evidence="1">
    <location>
        <position position="117"/>
    </location>
    <ligand>
        <name>ATP</name>
        <dbReference type="ChEBI" id="CHEBI:30616"/>
    </ligand>
</feature>
<feature type="binding site" evidence="1">
    <location>
        <position position="136"/>
    </location>
    <ligand>
        <name>substrate</name>
    </ligand>
</feature>
<feature type="binding site" evidence="1">
    <location>
        <position position="153"/>
    </location>
    <ligand>
        <name>ATP</name>
        <dbReference type="ChEBI" id="CHEBI:30616"/>
    </ligand>
</feature>
<evidence type="ECO:0000255" key="1">
    <source>
        <dbReference type="HAMAP-Rule" id="MF_00109"/>
    </source>
</evidence>
<gene>
    <name evidence="1" type="primary">aroK</name>
    <name type="ordered locus">PLES_54291</name>
</gene>
<dbReference type="EC" id="2.7.1.71" evidence="1"/>
<dbReference type="EMBL" id="FM209186">
    <property type="protein sequence ID" value="CAW30183.1"/>
    <property type="molecule type" value="Genomic_DNA"/>
</dbReference>
<dbReference type="RefSeq" id="WP_003095833.1">
    <property type="nucleotide sequence ID" value="NC_011770.1"/>
</dbReference>
<dbReference type="SMR" id="B7V3D2"/>
<dbReference type="KEGG" id="pag:PLES_54291"/>
<dbReference type="HOGENOM" id="CLU_057607_2_2_6"/>
<dbReference type="UniPathway" id="UPA00053">
    <property type="reaction ID" value="UER00088"/>
</dbReference>
<dbReference type="GO" id="GO:0005829">
    <property type="term" value="C:cytosol"/>
    <property type="evidence" value="ECO:0007669"/>
    <property type="project" value="TreeGrafter"/>
</dbReference>
<dbReference type="GO" id="GO:0005524">
    <property type="term" value="F:ATP binding"/>
    <property type="evidence" value="ECO:0007669"/>
    <property type="project" value="UniProtKB-UniRule"/>
</dbReference>
<dbReference type="GO" id="GO:0000287">
    <property type="term" value="F:magnesium ion binding"/>
    <property type="evidence" value="ECO:0007669"/>
    <property type="project" value="UniProtKB-UniRule"/>
</dbReference>
<dbReference type="GO" id="GO:0004765">
    <property type="term" value="F:shikimate kinase activity"/>
    <property type="evidence" value="ECO:0007669"/>
    <property type="project" value="UniProtKB-UniRule"/>
</dbReference>
<dbReference type="GO" id="GO:0008652">
    <property type="term" value="P:amino acid biosynthetic process"/>
    <property type="evidence" value="ECO:0007669"/>
    <property type="project" value="UniProtKB-KW"/>
</dbReference>
<dbReference type="GO" id="GO:0009073">
    <property type="term" value="P:aromatic amino acid family biosynthetic process"/>
    <property type="evidence" value="ECO:0007669"/>
    <property type="project" value="UniProtKB-KW"/>
</dbReference>
<dbReference type="GO" id="GO:0009423">
    <property type="term" value="P:chorismate biosynthetic process"/>
    <property type="evidence" value="ECO:0007669"/>
    <property type="project" value="UniProtKB-UniRule"/>
</dbReference>
<dbReference type="CDD" id="cd00464">
    <property type="entry name" value="SK"/>
    <property type="match status" value="1"/>
</dbReference>
<dbReference type="Gene3D" id="3.40.50.300">
    <property type="entry name" value="P-loop containing nucleotide triphosphate hydrolases"/>
    <property type="match status" value="1"/>
</dbReference>
<dbReference type="HAMAP" id="MF_00109">
    <property type="entry name" value="Shikimate_kinase"/>
    <property type="match status" value="1"/>
</dbReference>
<dbReference type="InterPro" id="IPR027417">
    <property type="entry name" value="P-loop_NTPase"/>
</dbReference>
<dbReference type="InterPro" id="IPR031322">
    <property type="entry name" value="Shikimate/glucono_kinase"/>
</dbReference>
<dbReference type="InterPro" id="IPR000623">
    <property type="entry name" value="Shikimate_kinase/TSH1"/>
</dbReference>
<dbReference type="InterPro" id="IPR023000">
    <property type="entry name" value="Shikimate_kinase_CS"/>
</dbReference>
<dbReference type="NCBIfam" id="NF003456">
    <property type="entry name" value="PRK05057.1"/>
    <property type="match status" value="1"/>
</dbReference>
<dbReference type="PANTHER" id="PTHR21087">
    <property type="entry name" value="SHIKIMATE KINASE"/>
    <property type="match status" value="1"/>
</dbReference>
<dbReference type="PANTHER" id="PTHR21087:SF16">
    <property type="entry name" value="SHIKIMATE KINASE 1, CHLOROPLASTIC"/>
    <property type="match status" value="1"/>
</dbReference>
<dbReference type="Pfam" id="PF01202">
    <property type="entry name" value="SKI"/>
    <property type="match status" value="1"/>
</dbReference>
<dbReference type="PRINTS" id="PR01100">
    <property type="entry name" value="SHIKIMTKNASE"/>
</dbReference>
<dbReference type="SUPFAM" id="SSF52540">
    <property type="entry name" value="P-loop containing nucleoside triphosphate hydrolases"/>
    <property type="match status" value="1"/>
</dbReference>
<dbReference type="PROSITE" id="PS01128">
    <property type="entry name" value="SHIKIMATE_KINASE"/>
    <property type="match status" value="1"/>
</dbReference>
<accession>B7V3D2</accession>
<proteinExistence type="inferred from homology"/>
<sequence length="172" mass="19237">MVNLILVGPMGAGKSTIGRLLAKELHLAFKDSDKEIEQRCGANIPWIFDVEGEVGFREREQAMLTELCAADGMVIATGGGAVMRDGNRQVLRAGGRVVYLHASVEHQIARTARDRNRPLLQKPNPGQILRDLMALRDPLYREIADVVVETDERPPRLVVQEILERLRKLPPR</sequence>
<protein>
    <recommendedName>
        <fullName evidence="1">Shikimate kinase</fullName>
        <shortName evidence="1">SK</shortName>
        <ecNumber evidence="1">2.7.1.71</ecNumber>
    </recommendedName>
</protein>
<reference key="1">
    <citation type="journal article" date="2009" name="Genome Res.">
        <title>Newly introduced genomic prophage islands are critical determinants of in vivo competitiveness in the Liverpool epidemic strain of Pseudomonas aeruginosa.</title>
        <authorList>
            <person name="Winstanley C."/>
            <person name="Langille M.G.I."/>
            <person name="Fothergill J.L."/>
            <person name="Kukavica-Ibrulj I."/>
            <person name="Paradis-Bleau C."/>
            <person name="Sanschagrin F."/>
            <person name="Thomson N.R."/>
            <person name="Winsor G.L."/>
            <person name="Quail M.A."/>
            <person name="Lennard N."/>
            <person name="Bignell A."/>
            <person name="Clarke L."/>
            <person name="Seeger K."/>
            <person name="Saunders D."/>
            <person name="Harris D."/>
            <person name="Parkhill J."/>
            <person name="Hancock R.E.W."/>
            <person name="Brinkman F.S.L."/>
            <person name="Levesque R.C."/>
        </authorList>
    </citation>
    <scope>NUCLEOTIDE SEQUENCE [LARGE SCALE GENOMIC DNA]</scope>
    <source>
        <strain>LESB58</strain>
    </source>
</reference>
<organism>
    <name type="scientific">Pseudomonas aeruginosa (strain LESB58)</name>
    <dbReference type="NCBI Taxonomy" id="557722"/>
    <lineage>
        <taxon>Bacteria</taxon>
        <taxon>Pseudomonadati</taxon>
        <taxon>Pseudomonadota</taxon>
        <taxon>Gammaproteobacteria</taxon>
        <taxon>Pseudomonadales</taxon>
        <taxon>Pseudomonadaceae</taxon>
        <taxon>Pseudomonas</taxon>
    </lineage>
</organism>
<name>AROK_PSEA8</name>
<keyword id="KW-0028">Amino-acid biosynthesis</keyword>
<keyword id="KW-0057">Aromatic amino acid biosynthesis</keyword>
<keyword id="KW-0067">ATP-binding</keyword>
<keyword id="KW-0963">Cytoplasm</keyword>
<keyword id="KW-0418">Kinase</keyword>
<keyword id="KW-0460">Magnesium</keyword>
<keyword id="KW-0479">Metal-binding</keyword>
<keyword id="KW-0547">Nucleotide-binding</keyword>
<keyword id="KW-0808">Transferase</keyword>